<sequence length="270" mass="28660">MSEIILTPKEQPEVPLEAPNIKPDVFAGKSIDEIKNIQIMHGNEVVKLGDFFEVSGEPADAPEDIKIIIDGDVYNTKRIGQEMTAGEIIVRGNVNMYVGAGMKGGKITVEGNAGSWAGQDMRGGEIEILGDADDYVGSSYRGDWRGMSGGTITVHGNADNEIGEYMNGGKIIIKGDVNIMPGIHMNNGLIIIEGNVVARAGGEMAGGTIVVKGMMQEFLAGFKYLGVEKDIELMVKNSPGAFYKFEGDHAIKGAKGIVYAAVGCNGHIAP</sequence>
<dbReference type="EC" id="1.2.7.12" evidence="2"/>
<dbReference type="EMBL" id="AJ009688">
    <property type="protein sequence ID" value="CAA08784.1"/>
    <property type="molecule type" value="Genomic_DNA"/>
</dbReference>
<dbReference type="PDB" id="5T5I">
    <property type="method" value="X-ray"/>
    <property type="resolution" value="1.90 A"/>
    <property type="chains" value="C/K=1-270"/>
</dbReference>
<dbReference type="PDB" id="5T5M">
    <property type="method" value="X-ray"/>
    <property type="resolution" value="2.50 A"/>
    <property type="chains" value="C=1-270"/>
</dbReference>
<dbReference type="PDBsum" id="5T5I"/>
<dbReference type="PDBsum" id="5T5M"/>
<dbReference type="SMR" id="O74031"/>
<dbReference type="STRING" id="145261.MWSIV6_0099"/>
<dbReference type="UniPathway" id="UPA00640">
    <property type="reaction ID" value="UER00692"/>
</dbReference>
<dbReference type="GO" id="GO:0018493">
    <property type="term" value="F:formylmethanofuran dehydrogenase activity"/>
    <property type="evidence" value="ECO:0007669"/>
    <property type="project" value="UniProtKB-EC"/>
</dbReference>
<dbReference type="GO" id="GO:0046914">
    <property type="term" value="F:transition metal ion binding"/>
    <property type="evidence" value="ECO:0007669"/>
    <property type="project" value="InterPro"/>
</dbReference>
<dbReference type="GO" id="GO:0019386">
    <property type="term" value="P:methanogenesis, from carbon dioxide"/>
    <property type="evidence" value="ECO:0007669"/>
    <property type="project" value="UniProtKB-UniPathway"/>
</dbReference>
<dbReference type="CDD" id="cd00980">
    <property type="entry name" value="FwdC/FmdC"/>
    <property type="match status" value="1"/>
</dbReference>
<dbReference type="Gene3D" id="2.160.20.60">
    <property type="entry name" value="Glutamate synthase, alpha subunit, C-terminal domain"/>
    <property type="match status" value="1"/>
</dbReference>
<dbReference type="InterPro" id="IPR054942">
    <property type="entry name" value="FMH_DH_FwdC"/>
</dbReference>
<dbReference type="InterPro" id="IPR017550">
    <property type="entry name" value="Formylmethanofuran_DH_suC"/>
</dbReference>
<dbReference type="InterPro" id="IPR036485">
    <property type="entry name" value="Glu_synth_asu_C_sf"/>
</dbReference>
<dbReference type="NCBIfam" id="NF042910">
    <property type="entry name" value="FMH_DH_FwdC"/>
    <property type="match status" value="1"/>
</dbReference>
<dbReference type="NCBIfam" id="TIGR03122">
    <property type="entry name" value="one_C_dehyd_C"/>
    <property type="match status" value="1"/>
</dbReference>
<dbReference type="PANTHER" id="PTHR39673">
    <property type="entry name" value="TUNGSTEN FORMYLMETHANOFURAN DEHYDROGENASE, SUBUNIT C (FWDC)"/>
    <property type="match status" value="1"/>
</dbReference>
<dbReference type="PANTHER" id="PTHR39673:SF5">
    <property type="entry name" value="TUNGSTEN-CONTAINING FORMYLMETHANOFURAN DEHYDROGENASE 2 SUBUNIT C"/>
    <property type="match status" value="1"/>
</dbReference>
<dbReference type="SUPFAM" id="SSF69336">
    <property type="entry name" value="Alpha subunit of glutamate synthase, C-terminal domain"/>
    <property type="match status" value="1"/>
</dbReference>
<gene>
    <name type="primary">fwdC</name>
</gene>
<name>FWDC_METWO</name>
<comment type="function">
    <text evidence="2">Catalyzes the reversible oxidation of CO(2) and methanofuran (MFR) to N-formylmethanofuran (CHO-MFR). This enzyme is oxygen-labile.</text>
</comment>
<comment type="catalytic activity">
    <reaction evidence="2">
        <text>N-formylmethanofuran + 2 oxidized [2Fe-2S]-[ferredoxin] + H2O = methanofuran + 2 reduced [2Fe-2S]-[ferredoxin] + CO2 + H(+)</text>
        <dbReference type="Rhea" id="RHEA:19841"/>
        <dbReference type="Rhea" id="RHEA-COMP:10000"/>
        <dbReference type="Rhea" id="RHEA-COMP:10001"/>
        <dbReference type="ChEBI" id="CHEBI:15377"/>
        <dbReference type="ChEBI" id="CHEBI:15378"/>
        <dbReference type="ChEBI" id="CHEBI:16526"/>
        <dbReference type="ChEBI" id="CHEBI:33737"/>
        <dbReference type="ChEBI" id="CHEBI:33738"/>
        <dbReference type="ChEBI" id="CHEBI:57727"/>
        <dbReference type="ChEBI" id="CHEBI:58151"/>
        <dbReference type="EC" id="1.2.7.12"/>
    </reaction>
</comment>
<comment type="pathway">
    <text>One-carbon metabolism; methanogenesis from CO(2); 5,10-methenyl-5,6,7,8-tetrahydromethanopterin from CO(2): step 1/3.</text>
</comment>
<comment type="subunit">
    <text evidence="1">This enzyme is composed of six subunits FwdA, FwdB, FwdC, FwdD, FwdF and FwdG.</text>
</comment>
<comment type="induction">
    <text>By growth on tungsten or molybdenum under anaerobic conditions.</text>
</comment>
<comment type="similarity">
    <text evidence="3">Belongs to the FwdC/FmdC family.</text>
</comment>
<accession>O74031</accession>
<organism>
    <name type="scientific">Methanothermobacter wolfeii</name>
    <name type="common">Methanobacterium wolfei</name>
    <dbReference type="NCBI Taxonomy" id="145261"/>
    <lineage>
        <taxon>Archaea</taxon>
        <taxon>Methanobacteriati</taxon>
        <taxon>Methanobacteriota</taxon>
        <taxon>Methanomada group</taxon>
        <taxon>Methanobacteria</taxon>
        <taxon>Methanobacteriales</taxon>
        <taxon>Methanobacteriaceae</taxon>
        <taxon>Methanothermobacter</taxon>
    </lineage>
</organism>
<reference key="1">
    <citation type="journal article" date="1998" name="Arch. Microbiol.">
        <title>The formylmethanofuran dehydrogenase isoenzymes in Methanobacterium wolfei and Methanobacterium thermoautotrophicum: induction of the molybdenum isoenzyme by molybdate and constitutive synthesis of the tungsten isoenzyme.</title>
        <authorList>
            <person name="Hochheimer A."/>
            <person name="Hedderich R."/>
            <person name="Thauer R.K."/>
        </authorList>
    </citation>
    <scope>NUCLEOTIDE SEQUENCE [GENOMIC DNA]</scope>
</reference>
<protein>
    <recommendedName>
        <fullName>Tungsten-containing formylmethanofuran dehydrogenase 2 subunit C</fullName>
        <ecNumber evidence="2">1.2.7.12</ecNumber>
    </recommendedName>
    <alternativeName>
        <fullName>Tungsten-containing formylmethanofuran dehydrogenase II subunit C</fullName>
    </alternativeName>
</protein>
<feature type="chain" id="PRO_0000144198" description="Tungsten-containing formylmethanofuran dehydrogenase 2 subunit C">
    <location>
        <begin position="1"/>
        <end position="270"/>
    </location>
</feature>
<feature type="repeat" description="1">
    <location>
        <begin position="80"/>
        <end position="92"/>
    </location>
</feature>
<feature type="repeat" description="2">
    <location>
        <begin position="99"/>
        <end position="111"/>
    </location>
</feature>
<feature type="repeat" description="3">
    <location>
        <begin position="118"/>
        <end position="130"/>
    </location>
</feature>
<feature type="repeat" description="4">
    <location>
        <begin position="144"/>
        <end position="156"/>
    </location>
</feature>
<feature type="repeat" description="5">
    <location>
        <begin position="163"/>
        <end position="175"/>
    </location>
</feature>
<feature type="repeat" description="6">
    <location>
        <begin position="182"/>
        <end position="194"/>
    </location>
</feature>
<feature type="repeat" description="7">
    <location>
        <begin position="201"/>
        <end position="213"/>
    </location>
</feature>
<feature type="region of interest" description="7 X 13 AA repeats of [GW]-X-X-M-X-X-G-X-[IL]-X-[IV]-X-G">
    <location>
        <begin position="80"/>
        <end position="213"/>
    </location>
</feature>
<feature type="strand" evidence="4">
    <location>
        <begin position="3"/>
        <end position="8"/>
    </location>
</feature>
<feature type="helix" evidence="4">
    <location>
        <begin position="23"/>
        <end position="26"/>
    </location>
</feature>
<feature type="helix" evidence="4">
    <location>
        <begin position="31"/>
        <end position="35"/>
    </location>
</feature>
<feature type="strand" evidence="4">
    <location>
        <begin position="38"/>
        <end position="41"/>
    </location>
</feature>
<feature type="strand" evidence="4">
    <location>
        <begin position="44"/>
        <end position="47"/>
    </location>
</feature>
<feature type="helix" evidence="4">
    <location>
        <begin position="48"/>
        <end position="50"/>
    </location>
</feature>
<feature type="strand" evidence="4">
    <location>
        <begin position="52"/>
        <end position="56"/>
    </location>
</feature>
<feature type="helix" evidence="4">
    <location>
        <begin position="62"/>
        <end position="64"/>
    </location>
</feature>
<feature type="strand" evidence="4">
    <location>
        <begin position="66"/>
        <end position="69"/>
    </location>
</feature>
<feature type="turn" evidence="4">
    <location>
        <begin position="79"/>
        <end position="82"/>
    </location>
</feature>
<feature type="strand" evidence="4">
    <location>
        <begin position="85"/>
        <end position="92"/>
    </location>
</feature>
<feature type="turn" evidence="4">
    <location>
        <begin position="98"/>
        <end position="101"/>
    </location>
</feature>
<feature type="strand" evidence="4">
    <location>
        <begin position="104"/>
        <end position="111"/>
    </location>
</feature>
<feature type="turn" evidence="4">
    <location>
        <begin position="115"/>
        <end position="120"/>
    </location>
</feature>
<feature type="strand" evidence="4">
    <location>
        <begin position="123"/>
        <end position="130"/>
    </location>
</feature>
<feature type="strand" evidence="4">
    <location>
        <begin position="151"/>
        <end position="156"/>
    </location>
</feature>
<feature type="turn" evidence="4">
    <location>
        <begin position="162"/>
        <end position="165"/>
    </location>
</feature>
<feature type="strand" evidence="4">
    <location>
        <begin position="167"/>
        <end position="175"/>
    </location>
</feature>
<feature type="strand" evidence="4">
    <location>
        <begin position="177"/>
        <end position="179"/>
    </location>
</feature>
<feature type="turn" evidence="4">
    <location>
        <begin position="181"/>
        <end position="184"/>
    </location>
</feature>
<feature type="strand" evidence="4">
    <location>
        <begin position="187"/>
        <end position="194"/>
    </location>
</feature>
<feature type="strand" evidence="4">
    <location>
        <begin position="196"/>
        <end position="198"/>
    </location>
</feature>
<feature type="turn" evidence="4">
    <location>
        <begin position="200"/>
        <end position="203"/>
    </location>
</feature>
<feature type="strand" evidence="4">
    <location>
        <begin position="208"/>
        <end position="213"/>
    </location>
</feature>
<feature type="strand" evidence="4">
    <location>
        <begin position="223"/>
        <end position="233"/>
    </location>
</feature>
<feature type="strand" evidence="4">
    <location>
        <begin position="236"/>
        <end position="247"/>
    </location>
</feature>
<feature type="strand" evidence="4">
    <location>
        <begin position="256"/>
        <end position="261"/>
    </location>
</feature>
<feature type="helix" evidence="4">
    <location>
        <begin position="262"/>
        <end position="264"/>
    </location>
</feature>
<feature type="turn" evidence="4">
    <location>
        <begin position="266"/>
        <end position="268"/>
    </location>
</feature>
<evidence type="ECO:0000250" key="1"/>
<evidence type="ECO:0000250" key="2">
    <source>
        <dbReference type="UniProtKB" id="Q48943"/>
    </source>
</evidence>
<evidence type="ECO:0000305" key="3"/>
<evidence type="ECO:0007829" key="4">
    <source>
        <dbReference type="PDB" id="5T5I"/>
    </source>
</evidence>
<proteinExistence type="evidence at protein level"/>
<keyword id="KW-0002">3D-structure</keyword>
<keyword id="KW-0484">Methanogenesis</keyword>
<keyword id="KW-0560">Oxidoreductase</keyword>
<keyword id="KW-0677">Repeat</keyword>